<feature type="signal peptide" evidence="5">
    <location>
        <begin position="1"/>
        <end position="16"/>
    </location>
</feature>
<feature type="chain" id="PRO_0000418579" description="Basic phospholipase A2 Bs-N6">
    <location>
        <begin position="17"/>
        <end position="138"/>
    </location>
</feature>
<feature type="active site" evidence="2">
    <location>
        <position position="63"/>
    </location>
</feature>
<feature type="active site" evidence="2">
    <location>
        <position position="105"/>
    </location>
</feature>
<feature type="binding site" evidence="2">
    <location>
        <position position="43"/>
    </location>
    <ligand>
        <name>Ca(2+)</name>
        <dbReference type="ChEBI" id="CHEBI:29108"/>
    </ligand>
</feature>
<feature type="binding site" evidence="2">
    <location>
        <position position="45"/>
    </location>
    <ligand>
        <name>Ca(2+)</name>
        <dbReference type="ChEBI" id="CHEBI:29108"/>
    </ligand>
</feature>
<feature type="binding site" evidence="2">
    <location>
        <position position="47"/>
    </location>
    <ligand>
        <name>Ca(2+)</name>
        <dbReference type="ChEBI" id="CHEBI:29108"/>
    </ligand>
</feature>
<feature type="binding site" evidence="2">
    <location>
        <position position="64"/>
    </location>
    <ligand>
        <name>Ca(2+)</name>
        <dbReference type="ChEBI" id="CHEBI:29108"/>
    </ligand>
</feature>
<feature type="disulfide bond" evidence="2">
    <location>
        <begin position="42"/>
        <end position="131"/>
    </location>
</feature>
<feature type="disulfide bond" evidence="2">
    <location>
        <begin position="44"/>
        <end position="60"/>
    </location>
</feature>
<feature type="disulfide bond" evidence="2">
    <location>
        <begin position="59"/>
        <end position="111"/>
    </location>
</feature>
<feature type="disulfide bond" evidence="2">
    <location>
        <begin position="65"/>
        <end position="138"/>
    </location>
</feature>
<feature type="disulfide bond" evidence="2">
    <location>
        <begin position="66"/>
        <end position="104"/>
    </location>
</feature>
<feature type="disulfide bond" evidence="2">
    <location>
        <begin position="73"/>
        <end position="97"/>
    </location>
</feature>
<feature type="disulfide bond" evidence="2">
    <location>
        <begin position="91"/>
        <end position="102"/>
    </location>
</feature>
<comment type="function">
    <text evidence="1">Snake venom phospholipase A2 (PLA2) that shows myotoxic activities. PLA2 catalyzes the calcium-dependent hydrolysis of the 2-acyl groups in 3-sn-phosphoglycerides (By similarity).</text>
</comment>
<comment type="catalytic activity">
    <reaction evidence="3 4">
        <text>a 1,2-diacyl-sn-glycero-3-phosphocholine + H2O = a 1-acyl-sn-glycero-3-phosphocholine + a fatty acid + H(+)</text>
        <dbReference type="Rhea" id="RHEA:15801"/>
        <dbReference type="ChEBI" id="CHEBI:15377"/>
        <dbReference type="ChEBI" id="CHEBI:15378"/>
        <dbReference type="ChEBI" id="CHEBI:28868"/>
        <dbReference type="ChEBI" id="CHEBI:57643"/>
        <dbReference type="ChEBI" id="CHEBI:58168"/>
        <dbReference type="EC" id="3.1.1.4"/>
    </reaction>
</comment>
<comment type="cofactor">
    <cofactor evidence="1">
        <name>Ca(2+)</name>
        <dbReference type="ChEBI" id="CHEBI:29108"/>
    </cofactor>
    <text evidence="1">Binds 1 Ca(2+) ion.</text>
</comment>
<comment type="biophysicochemical properties">
    <kinetics>
        <Vmax evidence="5">208.0 umol/min/mg enzyme with DPPC + deoxycholate as substrate (at pH 7.4 and 37 degrees Celsius)</Vmax>
        <Vmax evidence="5">116.0 umol/min/mg enzyme with DPPC + Triton X-100 as substrate (at pH 7.4 and 37 degrees Celsius)</Vmax>
        <text>When tested as a monomer.</text>
    </kinetics>
</comment>
<comment type="subunit">
    <text evidence="5">Monomer.</text>
</comment>
<comment type="subcellular location">
    <subcellularLocation>
        <location evidence="5">Secreted</location>
    </subcellularLocation>
</comment>
<comment type="tissue specificity">
    <text evidence="8">Expressed by the venom gland.</text>
</comment>
<comment type="PTM">
    <text evidence="1">Contains 7 disulfide bonds.</text>
</comment>
<comment type="mass spectrometry"/>
<comment type="similarity">
    <text evidence="7">Belongs to the phospholipase A2 family. Group II subfamily. D49 sub-subfamily.</text>
</comment>
<accession>Q6EER4</accession>
<reference key="1">
    <citation type="journal article" date="2004" name="Biochem. J.">
        <title>Molecular evolution and structure-function relationships of crotoxin-like and asparagine-6-containing phospholipases A2 in pit viper venoms.</title>
        <authorList>
            <person name="Chen Y.-H."/>
            <person name="Wang Y.-M."/>
            <person name="Hseu M.-J."/>
            <person name="Tsai I.-H."/>
        </authorList>
    </citation>
    <scope>NUCLEOTIDE SEQUENCE [MRNA]</scope>
    <scope>PROTEIN SEQUENCE OF 17-39</scope>
    <scope>BIOPHYSICOCHEMICAL PROPERTIES</scope>
    <scope>SUBUNIT</scope>
    <scope>MASS SPECTROMETRY</scope>
    <scope>SUBCELLULAR LOCATION</scope>
    <source>
        <tissue>Venom</tissue>
        <tissue>Venom gland</tissue>
    </source>
</reference>
<proteinExistence type="evidence at protein level"/>
<name>PA2B_BOTSC</name>
<organism>
    <name type="scientific">Bothriechis schlegelii</name>
    <name type="common">Eyelash palm pitviper</name>
    <dbReference type="NCBI Taxonomy" id="44725"/>
    <lineage>
        <taxon>Eukaryota</taxon>
        <taxon>Metazoa</taxon>
        <taxon>Chordata</taxon>
        <taxon>Craniata</taxon>
        <taxon>Vertebrata</taxon>
        <taxon>Euteleostomi</taxon>
        <taxon>Lepidosauria</taxon>
        <taxon>Squamata</taxon>
        <taxon>Bifurcata</taxon>
        <taxon>Unidentata</taxon>
        <taxon>Episquamata</taxon>
        <taxon>Toxicofera</taxon>
        <taxon>Serpentes</taxon>
        <taxon>Colubroidea</taxon>
        <taxon>Viperidae</taxon>
        <taxon>Crotalinae</taxon>
        <taxon>Bothriechis</taxon>
    </lineage>
</organism>
<evidence type="ECO:0000250" key="1"/>
<evidence type="ECO:0000250" key="2">
    <source>
        <dbReference type="UniProtKB" id="O42187"/>
    </source>
</evidence>
<evidence type="ECO:0000255" key="3">
    <source>
        <dbReference type="PROSITE-ProRule" id="PRU10035"/>
    </source>
</evidence>
<evidence type="ECO:0000255" key="4">
    <source>
        <dbReference type="PROSITE-ProRule" id="PRU10036"/>
    </source>
</evidence>
<evidence type="ECO:0000269" key="5">
    <source>
    </source>
</evidence>
<evidence type="ECO:0000303" key="6">
    <source>
    </source>
</evidence>
<evidence type="ECO:0000305" key="7"/>
<evidence type="ECO:0000305" key="8">
    <source>
    </source>
</evidence>
<protein>
    <recommendedName>
        <fullName evidence="6">Basic phospholipase A2 Bs-N6</fullName>
        <shortName>svPLA2</shortName>
        <ecNumber>3.1.1.4</ecNumber>
    </recommendedName>
    <alternativeName>
        <fullName>Phosphatidylcholine 2-acylhydrolase</fullName>
    </alternativeName>
</protein>
<keyword id="KW-0106">Calcium</keyword>
<keyword id="KW-0903">Direct protein sequencing</keyword>
<keyword id="KW-1015">Disulfide bond</keyword>
<keyword id="KW-0378">Hydrolase</keyword>
<keyword id="KW-0442">Lipid degradation</keyword>
<keyword id="KW-0443">Lipid metabolism</keyword>
<keyword id="KW-0479">Metal-binding</keyword>
<keyword id="KW-0959">Myotoxin</keyword>
<keyword id="KW-0964">Secreted</keyword>
<keyword id="KW-0732">Signal</keyword>
<keyword id="KW-0800">Toxin</keyword>
<sequence>MRTLWIVAVLLVGVEGNLLQFNKMIKIMTRKNGIPYYSSYGCYCGWGGQGQPLDATDRCCFVHDCCYEKLTDCSPKTDIYSYSWKSGVIICGEGTPCEKQICECDRVAAVCFGANLGTYKKSYMFYPDFLCTEPSEKC</sequence>
<dbReference type="EC" id="3.1.1.4"/>
<dbReference type="EMBL" id="AY355168">
    <property type="protein sequence ID" value="AAR14162.1"/>
    <property type="molecule type" value="mRNA"/>
</dbReference>
<dbReference type="SMR" id="Q6EER4"/>
<dbReference type="GO" id="GO:0005576">
    <property type="term" value="C:extracellular region"/>
    <property type="evidence" value="ECO:0007669"/>
    <property type="project" value="UniProtKB-SubCell"/>
</dbReference>
<dbReference type="GO" id="GO:0005509">
    <property type="term" value="F:calcium ion binding"/>
    <property type="evidence" value="ECO:0007669"/>
    <property type="project" value="InterPro"/>
</dbReference>
<dbReference type="GO" id="GO:0047498">
    <property type="term" value="F:calcium-dependent phospholipase A2 activity"/>
    <property type="evidence" value="ECO:0007669"/>
    <property type="project" value="TreeGrafter"/>
</dbReference>
<dbReference type="GO" id="GO:0005543">
    <property type="term" value="F:phospholipid binding"/>
    <property type="evidence" value="ECO:0007669"/>
    <property type="project" value="TreeGrafter"/>
</dbReference>
<dbReference type="GO" id="GO:0090729">
    <property type="term" value="F:toxin activity"/>
    <property type="evidence" value="ECO:0007669"/>
    <property type="project" value="UniProtKB-KW"/>
</dbReference>
<dbReference type="GO" id="GO:0050482">
    <property type="term" value="P:arachidonate secretion"/>
    <property type="evidence" value="ECO:0007669"/>
    <property type="project" value="InterPro"/>
</dbReference>
<dbReference type="GO" id="GO:0016042">
    <property type="term" value="P:lipid catabolic process"/>
    <property type="evidence" value="ECO:0007669"/>
    <property type="project" value="UniProtKB-KW"/>
</dbReference>
<dbReference type="GO" id="GO:0042130">
    <property type="term" value="P:negative regulation of T cell proliferation"/>
    <property type="evidence" value="ECO:0007669"/>
    <property type="project" value="TreeGrafter"/>
</dbReference>
<dbReference type="GO" id="GO:0006644">
    <property type="term" value="P:phospholipid metabolic process"/>
    <property type="evidence" value="ECO:0007669"/>
    <property type="project" value="InterPro"/>
</dbReference>
<dbReference type="CDD" id="cd00125">
    <property type="entry name" value="PLA2c"/>
    <property type="match status" value="1"/>
</dbReference>
<dbReference type="FunFam" id="1.20.90.10:FF:000001">
    <property type="entry name" value="Basic phospholipase A2 homolog"/>
    <property type="match status" value="1"/>
</dbReference>
<dbReference type="Gene3D" id="1.20.90.10">
    <property type="entry name" value="Phospholipase A2 domain"/>
    <property type="match status" value="1"/>
</dbReference>
<dbReference type="InterPro" id="IPR001211">
    <property type="entry name" value="PLipase_A2"/>
</dbReference>
<dbReference type="InterPro" id="IPR033112">
    <property type="entry name" value="PLipase_A2_Asp_AS"/>
</dbReference>
<dbReference type="InterPro" id="IPR016090">
    <property type="entry name" value="PLipase_A2_dom"/>
</dbReference>
<dbReference type="InterPro" id="IPR036444">
    <property type="entry name" value="PLipase_A2_dom_sf"/>
</dbReference>
<dbReference type="InterPro" id="IPR033113">
    <property type="entry name" value="PLipase_A2_His_AS"/>
</dbReference>
<dbReference type="PANTHER" id="PTHR11716">
    <property type="entry name" value="PHOSPHOLIPASE A2 FAMILY MEMBER"/>
    <property type="match status" value="1"/>
</dbReference>
<dbReference type="PANTHER" id="PTHR11716:SF9">
    <property type="entry name" value="PHOSPHOLIPASE A2, MEMBRANE ASSOCIATED"/>
    <property type="match status" value="1"/>
</dbReference>
<dbReference type="Pfam" id="PF00068">
    <property type="entry name" value="Phospholip_A2_1"/>
    <property type="match status" value="1"/>
</dbReference>
<dbReference type="PRINTS" id="PR00389">
    <property type="entry name" value="PHPHLIPASEA2"/>
</dbReference>
<dbReference type="SMART" id="SM00085">
    <property type="entry name" value="PA2c"/>
    <property type="match status" value="1"/>
</dbReference>
<dbReference type="SUPFAM" id="SSF48619">
    <property type="entry name" value="Phospholipase A2, PLA2"/>
    <property type="match status" value="1"/>
</dbReference>
<dbReference type="PROSITE" id="PS00119">
    <property type="entry name" value="PA2_ASP"/>
    <property type="match status" value="1"/>
</dbReference>
<dbReference type="PROSITE" id="PS00118">
    <property type="entry name" value="PA2_HIS"/>
    <property type="match status" value="1"/>
</dbReference>